<reference key="1">
    <citation type="journal article" date="1990" name="FEBS Lett.">
        <title>Human platelet glycoprotein IX. Characterization of cDNA and localization of the gene to chromosome 3.</title>
        <authorList>
            <person name="Hickey M.J."/>
            <person name="Deaven L.L."/>
            <person name="Roth G.J."/>
        </authorList>
    </citation>
    <scope>NUCLEOTIDE SEQUENCE [MRNA]</scope>
    <scope>PROTEIN SEQUENCE OF 17-33 AND 98-109</scope>
</reference>
<reference key="2">
    <citation type="submission" date="1997-06" db="EMBL/GenBank/DDBJ databases">
        <authorList>
            <person name="Roth G.J."/>
        </authorList>
    </citation>
    <scope>SEQUENCE REVISION TO 125</scope>
</reference>
<reference key="3">
    <citation type="journal article" date="1993" name="J. Biol. Chem.">
        <title>Characterization of the gene encoding human platelet glycoprotein IX.</title>
        <authorList>
            <person name="Hickey M.J."/>
            <person name="Roth G.J."/>
        </authorList>
    </citation>
    <scope>NUCLEOTIDE SEQUENCE [GENOMIC DNA]</scope>
    <source>
        <tissue>Liver</tissue>
    </source>
</reference>
<reference key="4">
    <citation type="journal article" date="2004" name="Genome Res.">
        <title>The status, quality, and expansion of the NIH full-length cDNA project: the Mammalian Gene Collection (MGC).</title>
        <authorList>
            <consortium name="The MGC Project Team"/>
        </authorList>
    </citation>
    <scope>NUCLEOTIDE SEQUENCE [LARGE SCALE MRNA]</scope>
    <scope>VARIANT THR-156</scope>
    <source>
        <tissue>Pancreas</tissue>
    </source>
</reference>
<reference key="5">
    <citation type="journal article" date="1989" name="Proc. Natl. Acad. Sci. U.S.A.">
        <title>Human platelet glycoprotein IX: an adhesive prototype of leucine-rich glycoproteins with flank-center-flank structures.</title>
        <authorList>
            <person name="Hickey M.J."/>
            <person name="Williams S.A."/>
            <person name="Roth G.J."/>
        </authorList>
    </citation>
    <scope>NUCLEOTIDE SEQUENCE [MRNA] OF 12-177</scope>
    <scope>PROTEIN SEQUENCE OF 17-33 AND 98-109</scope>
</reference>
<reference key="6">
    <citation type="journal article" date="1997" name="Thromb. Haemost.">
        <title>Corrected DNA sequence of the platelet glycoprotein IX gene.</title>
        <authorList>
            <person name="Hayashi T."/>
            <person name="Suzuki K."/>
        </authorList>
    </citation>
    <scope>NUCLEOTIDE SEQUENCE [GENOMIC DNA] OF 58-141</scope>
</reference>
<reference key="7">
    <citation type="journal article" date="1988" name="Biochem. Biophys. Res. Commun.">
        <title>Isolation and characterization of human platelet glycoprotein IX.</title>
        <authorList>
            <person name="Roth G.J."/>
            <person name="Ozols J."/>
            <person name="Nugent D.J."/>
            <person name="Williams S.A."/>
        </authorList>
    </citation>
    <scope>PROTEIN SEQUENCE OF 17-33</scope>
</reference>
<reference key="8">
    <citation type="journal article" date="2003" name="Nat. Biotechnol.">
        <title>Exploring proteomes and analyzing protein processing by mass spectrometric identification of sorted N-terminal peptides.</title>
        <authorList>
            <person name="Gevaert K."/>
            <person name="Goethals M."/>
            <person name="Martens L."/>
            <person name="Van Damme J."/>
            <person name="Staes A."/>
            <person name="Thomas G.R."/>
            <person name="Vandekerckhove J."/>
        </authorList>
    </citation>
    <scope>PROTEIN SEQUENCE OF 17-27</scope>
    <source>
        <tissue>Platelet</tissue>
    </source>
</reference>
<reference key="9">
    <citation type="journal article" date="1993" name="Blood">
        <title>Double heterozygosity for mutations in the platelet glycoprotein IX gene in three siblings with Bernard-Soulier syndrome.</title>
        <authorList>
            <person name="Wright S.D."/>
            <person name="Michaelides K."/>
            <person name="Johnson D.J."/>
            <person name="West N.C."/>
            <person name="Tuddenham E.G."/>
        </authorList>
    </citation>
    <scope>VARIANTS BSS GLY-37 AND SER-61</scope>
</reference>
<reference key="10">
    <citation type="journal article" date="1997" name="Br. J. Haematol.">
        <title>A phenylalanine-55 to serine amino-acid substitution in the human glycoprotein IX leucine-rich repeat is associated with Bernard-Soulier syndrome.</title>
        <authorList>
            <person name="Noris P."/>
            <person name="Simsek S."/>
            <person name="Stibbe J."/>
            <person name="von dem Borne A.E.G.K."/>
        </authorList>
    </citation>
    <scope>VARIANT BSS SER-71</scope>
</reference>
<reference key="11">
    <citation type="journal article" date="1998" name="Br. J. Haematol.">
        <title>A new variant of Bernard-Soulier syndrome characterized by dysfunctional glycoprotein (GP) Ib and severely reduced amounts of GPIX and GPV.</title>
        <authorList>
            <person name="Noris P."/>
            <person name="Arbustini E."/>
            <person name="Spedini P."/>
            <person name="Belletti S."/>
            <person name="Balduini C.L."/>
        </authorList>
    </citation>
    <scope>VARIANT BSS PRO-56</scope>
</reference>
<reference key="12">
    <citation type="journal article" date="1999" name="Br. J. Haematol.">
        <title>Cys97--&gt;Tyr mutation in the glycoprotein IX gene associated with Bernard-Soulier syndrome.</title>
        <authorList>
            <person name="Kunishima S."/>
            <person name="Tomiyama Y."/>
            <person name="Honda S."/>
            <person name="Kurata Y."/>
            <person name="Kamiya T."/>
            <person name="Ozawa K."/>
            <person name="Saito H."/>
        </authorList>
    </citation>
    <scope>VARIANT BSS TYR-113</scope>
</reference>
<reference key="13">
    <citation type="journal article" date="2001" name="Br. J. Haematol.">
        <title>Identification of a new mutation in platelet glycoprotein IX (GPIX) in a patient with Bernard-Soulier syndrome.</title>
        <authorList>
            <person name="Rivera C.E."/>
            <person name="Villagra J."/>
            <person name="Riordan M."/>
            <person name="Williams S."/>
            <person name="Lindstrom K.J."/>
            <person name="Rick M.E."/>
        </authorList>
    </citation>
    <scope>VARIANT BSS ARG-24</scope>
</reference>
<reference key="14">
    <citation type="journal article" date="2001" name="Zhonghua Xue Ye Xue Za Zhi">
        <title>A novel point mutation in the transmembrane domain of platelet glycoprotein IX gene identified in a Bernard-Soulier syndrome patient.</title>
        <authorList>
            <person name="Wang Z."/>
            <person name="Shi J."/>
            <person name="Han Y."/>
        </authorList>
    </citation>
    <scope>VARIANT THR-156</scope>
</reference>
<reference key="15">
    <citation type="journal article" date="2002" name="Br. J. Haematol.">
        <title>A Leu7-to-Pro mutation in the signal peptide of platelet glycoprotein (GP)IX in a case of Bernard-Soulier syndrome abolishes surface expression of the GPIb-V-IX complex.</title>
        <authorList>
            <person name="Lanza F."/>
            <person name="de la Salle C."/>
            <person name="Baas M.-J."/>
            <person name="Schwartz A."/>
            <person name="Boval B."/>
            <person name="Cazenave J.-P."/>
            <person name="Caen J.P."/>
        </authorList>
    </citation>
    <scope>VARIANT BSS PRO-7</scope>
</reference>
<organism>
    <name type="scientific">Homo sapiens</name>
    <name type="common">Human</name>
    <dbReference type="NCBI Taxonomy" id="9606"/>
    <lineage>
        <taxon>Eukaryota</taxon>
        <taxon>Metazoa</taxon>
        <taxon>Chordata</taxon>
        <taxon>Craniata</taxon>
        <taxon>Vertebrata</taxon>
        <taxon>Euteleostomi</taxon>
        <taxon>Mammalia</taxon>
        <taxon>Eutheria</taxon>
        <taxon>Euarchontoglires</taxon>
        <taxon>Primates</taxon>
        <taxon>Haplorrhini</taxon>
        <taxon>Catarrhini</taxon>
        <taxon>Hominidae</taxon>
        <taxon>Homo</taxon>
    </lineage>
</organism>
<protein>
    <recommendedName>
        <fullName>Platelet glycoprotein IX</fullName>
        <shortName>GP-IX</shortName>
        <shortName>GPIX</shortName>
    </recommendedName>
    <alternativeName>
        <fullName>Glycoprotein 9</fullName>
    </alternativeName>
    <cdAntigenName>CD42a</cdAntigenName>
</protein>
<name>GPIX_HUMAN</name>
<feature type="signal peptide" evidence="6 8 9 10">
    <location>
        <begin position="1"/>
        <end position="16"/>
    </location>
</feature>
<feature type="chain" id="PRO_0000021360" description="Platelet glycoprotein IX">
    <location>
        <begin position="17"/>
        <end position="177"/>
    </location>
</feature>
<feature type="topological domain" description="Extracellular" evidence="1">
    <location>
        <begin position="17"/>
        <end position="147"/>
    </location>
</feature>
<feature type="transmembrane region" description="Helical" evidence="1">
    <location>
        <begin position="148"/>
        <end position="168"/>
    </location>
</feature>
<feature type="topological domain" description="Cytoplasmic" evidence="1">
    <location>
        <begin position="169"/>
        <end position="177"/>
    </location>
</feature>
<feature type="domain" description="LRRNT">
    <location>
        <begin position="17"/>
        <end position="51"/>
    </location>
</feature>
<feature type="repeat" description="LRR">
    <location>
        <begin position="60"/>
        <end position="83"/>
    </location>
</feature>
<feature type="domain" description="LRRCT">
    <location>
        <begin position="85"/>
        <end position="137"/>
    </location>
</feature>
<feature type="glycosylation site" description="N-linked (GlcNAc...) asparagine" evidence="1">
    <location>
        <position position="60"/>
    </location>
</feature>
<feature type="sequence variant" id="VAR_024996" description="In BSS; dbSNP:rs121918038." evidence="5">
    <original>L</original>
    <variation>P</variation>
    <location>
        <position position="7"/>
    </location>
</feature>
<feature type="sequence variant" id="VAR_024997" description="In BSS; dbSNP:rs28933378." evidence="3">
    <original>C</original>
    <variation>R</variation>
    <location>
        <position position="24"/>
    </location>
</feature>
<feature type="sequence variant" id="VAR_005263" description="In BSS; dbSNP:rs121918036." evidence="11">
    <original>D</original>
    <variation>G</variation>
    <location>
        <position position="37"/>
    </location>
</feature>
<feature type="sequence variant" id="VAR_024998" description="In BSS; dbSNP:rs28933377." evidence="13">
    <original>L</original>
    <variation>P</variation>
    <location>
        <position position="56"/>
    </location>
</feature>
<feature type="sequence variant" id="VAR_005264" description="In BSS; dbSNP:rs5030764." evidence="11">
    <original>N</original>
    <variation>S</variation>
    <location>
        <position position="61"/>
    </location>
</feature>
<feature type="sequence variant" id="VAR_024999" description="In BSS; dbSNP:rs121918037." evidence="12">
    <original>F</original>
    <variation>S</variation>
    <location>
        <position position="71"/>
    </location>
</feature>
<feature type="sequence variant" id="VAR_025008" description="In BSS." evidence="2">
    <original>C</original>
    <variation>Y</variation>
    <location>
        <position position="113"/>
    </location>
</feature>
<feature type="sequence variant" id="VAR_025009" description="In dbSNP:rs3796130." evidence="4 7">
    <original>A</original>
    <variation>T</variation>
    <location>
        <position position="156"/>
    </location>
</feature>
<feature type="sequence conflict" description="In Ref. 7; AA sequence." evidence="14" ref="7">
    <original>CTC</original>
    <variation>LTT</variation>
    <location>
        <begin position="24"/>
        <end position="26"/>
    </location>
</feature>
<feature type="sequence conflict" description="In Ref. 2; AAA36809." evidence="14" ref="2">
    <location>
        <position position="125"/>
    </location>
</feature>
<feature type="turn" evidence="15">
    <location>
        <begin position="68"/>
        <end position="73"/>
    </location>
</feature>
<feature type="helix" evidence="15">
    <location>
        <begin position="94"/>
        <end position="101"/>
    </location>
</feature>
<gene>
    <name type="primary">GP9</name>
</gene>
<comment type="function">
    <text>The GPIb-V-IX complex functions as the vWF receptor and mediates vWF-dependent platelet adhesion to blood vessels. The adhesion of platelets to injured vascular surfaces in the arterial circulation is a critical initiating event in hemostasis. GP-IX may provide for membrane insertion and orientation of GP-Ib.</text>
</comment>
<comment type="subunit">
    <text>Two GP-Ib beta are disulfide-linked to one GP-Ib alpha. GP-IX is complexed with the GP-Ib heterodimer via a non covalent linkage.</text>
</comment>
<comment type="interaction">
    <interactant intactId="EBI-1754109">
        <id>P14770</id>
    </interactant>
    <interactant intactId="EBI-10891395">
        <id>P40197</id>
        <label>GP5</label>
    </interactant>
    <organismsDiffer>false</organismsDiffer>
    <experiments>2</experiments>
</comment>
<comment type="interaction">
    <interactant intactId="EBI-1754109">
        <id>P14770</id>
    </interactant>
    <interactant intactId="EBI-740785">
        <id>P49639</id>
        <label>HOXA1</label>
    </interactant>
    <organismsDiffer>false</organismsDiffer>
    <experiments>4</experiments>
</comment>
<comment type="interaction">
    <interactant intactId="EBI-1754109">
        <id>P14770</id>
    </interactant>
    <interactant intactId="EBI-742487">
        <id>O43597</id>
        <label>SPRY2</label>
    </interactant>
    <organismsDiffer>false</organismsDiffer>
    <experiments>3</experiments>
</comment>
<comment type="subcellular location">
    <subcellularLocation>
        <location>Membrane</location>
        <topology>Single-pass type I membrane protein</topology>
    </subcellularLocation>
</comment>
<comment type="disease" evidence="2 3 4 5 11 12 13">
    <disease id="DI-01274">
        <name>Bernard-Soulier syndrome</name>
        <acronym>BSS</acronym>
        <description>A coagulation disorder characterized by a prolonged bleeding time, unusually large platelets, thrombocytopenia, and impaired prothrombin consumption.</description>
        <dbReference type="MIM" id="231200"/>
    </disease>
    <text>The disease is caused by variants affecting the gene represented in this entry.</text>
</comment>
<comment type="miscellaneous">
    <text>Platelet activation apparently involves disruption of the macromolecular complex of GP-Ib with the platelet glycoprotein IX (GP-IX) and dissociation of GP-Ib from the actin-binding protein.</text>
</comment>
<dbReference type="EMBL" id="X52997">
    <property type="protein sequence ID" value="CAA37186.1"/>
    <property type="molecule type" value="mRNA"/>
</dbReference>
<dbReference type="EMBL" id="M80478">
    <property type="protein sequence ID" value="AAB40042.1"/>
    <property type="molecule type" value="Genomic_DNA"/>
</dbReference>
<dbReference type="EMBL" id="M25827">
    <property type="protein sequence ID" value="AAA36809.1"/>
    <property type="molecule type" value="mRNA"/>
</dbReference>
<dbReference type="EMBL" id="BC030229">
    <property type="protein sequence ID" value="AAH30229.1"/>
    <property type="molecule type" value="mRNA"/>
</dbReference>
<dbReference type="EMBL" id="D88290">
    <property type="protein sequence ID" value="BAA13580.1"/>
    <property type="molecule type" value="Genomic_DNA"/>
</dbReference>
<dbReference type="CCDS" id="CCDS3055.1"/>
<dbReference type="PIR" id="A46606">
    <property type="entry name" value="A46606"/>
</dbReference>
<dbReference type="RefSeq" id="NP_000165.1">
    <property type="nucleotide sequence ID" value="NM_000174.5"/>
</dbReference>
<dbReference type="RefSeq" id="XP_005247431.1">
    <property type="nucleotide sequence ID" value="XM_005247374.3"/>
</dbReference>
<dbReference type="RefSeq" id="XP_011511003.1">
    <property type="nucleotide sequence ID" value="XM_011512701.1"/>
</dbReference>
<dbReference type="RefSeq" id="XP_011511004.1">
    <property type="nucleotide sequence ID" value="XM_011512702.1"/>
</dbReference>
<dbReference type="RefSeq" id="XP_047303953.1">
    <property type="nucleotide sequence ID" value="XM_047447997.1"/>
</dbReference>
<dbReference type="RefSeq" id="XP_054202216.1">
    <property type="nucleotide sequence ID" value="XM_054346241.1"/>
</dbReference>
<dbReference type="RefSeq" id="XP_054202217.1">
    <property type="nucleotide sequence ID" value="XM_054346242.1"/>
</dbReference>
<dbReference type="RefSeq" id="XP_054202218.1">
    <property type="nucleotide sequence ID" value="XM_054346243.1"/>
</dbReference>
<dbReference type="PDB" id="3REZ">
    <property type="method" value="X-ray"/>
    <property type="resolution" value="2.35 A"/>
    <property type="chains" value="A/B/C/D=45-52, A/B/C/D=65-76, A/B/C/D=92-102"/>
</dbReference>
<dbReference type="PDB" id="8WFS">
    <property type="method" value="EM"/>
    <property type="resolution" value="3.36 A"/>
    <property type="chains" value="E/X=17-177"/>
</dbReference>
<dbReference type="PDBsum" id="3REZ"/>
<dbReference type="PDBsum" id="8WFS"/>
<dbReference type="EMDB" id="EMD-37498"/>
<dbReference type="SMR" id="P14770"/>
<dbReference type="BioGRID" id="109077">
    <property type="interactions" value="110"/>
</dbReference>
<dbReference type="ComplexPortal" id="CPX-114">
    <property type="entry name" value="Glycoprotein Ib-IX-V complex"/>
</dbReference>
<dbReference type="ComplexPortal" id="CPX-117">
    <property type="entry name" value="Glycoprotein Ib-IX-V-Filamin-A complex"/>
</dbReference>
<dbReference type="CORUM" id="P14770"/>
<dbReference type="FunCoup" id="P14770">
    <property type="interactions" value="341"/>
</dbReference>
<dbReference type="IntAct" id="P14770">
    <property type="interactions" value="93"/>
</dbReference>
<dbReference type="MINT" id="P14770"/>
<dbReference type="STRING" id="9606.ENSP00000303942"/>
<dbReference type="DrugBank" id="DB00468">
    <property type="generic name" value="Quinine"/>
</dbReference>
<dbReference type="GlyCosmos" id="P14770">
    <property type="glycosylation" value="1 site, No reported glycans"/>
</dbReference>
<dbReference type="GlyGen" id="P14770">
    <property type="glycosylation" value="1 site"/>
</dbReference>
<dbReference type="iPTMnet" id="P14770"/>
<dbReference type="PhosphoSitePlus" id="P14770"/>
<dbReference type="BioMuta" id="GP9"/>
<dbReference type="DMDM" id="2822110"/>
<dbReference type="OGP" id="P14770"/>
<dbReference type="MassIVE" id="P14770"/>
<dbReference type="PaxDb" id="9606-ENSP00000303942"/>
<dbReference type="PeptideAtlas" id="P14770"/>
<dbReference type="ProteomicsDB" id="53080"/>
<dbReference type="Antibodypedia" id="17356">
    <property type="antibodies" value="518 antibodies from 38 providers"/>
</dbReference>
<dbReference type="DNASU" id="2815"/>
<dbReference type="Ensembl" id="ENST00000307395.5">
    <property type="protein sequence ID" value="ENSP00000303942.4"/>
    <property type="gene ID" value="ENSG00000169704.5"/>
</dbReference>
<dbReference type="GeneID" id="2815"/>
<dbReference type="KEGG" id="hsa:2815"/>
<dbReference type="MANE-Select" id="ENST00000307395.5">
    <property type="protein sequence ID" value="ENSP00000303942.4"/>
    <property type="RefSeq nucleotide sequence ID" value="NM_000174.5"/>
    <property type="RefSeq protein sequence ID" value="NP_000165.1"/>
</dbReference>
<dbReference type="UCSC" id="uc003elm.3">
    <property type="organism name" value="human"/>
</dbReference>
<dbReference type="AGR" id="HGNC:4444"/>
<dbReference type="CTD" id="2815"/>
<dbReference type="DisGeNET" id="2815"/>
<dbReference type="GeneCards" id="GP9"/>
<dbReference type="HGNC" id="HGNC:4444">
    <property type="gene designation" value="GP9"/>
</dbReference>
<dbReference type="HPA" id="ENSG00000169704">
    <property type="expression patterns" value="Tissue enhanced (bone marrow, lung, lymphoid tissue)"/>
</dbReference>
<dbReference type="MalaCards" id="GP9"/>
<dbReference type="MIM" id="173515">
    <property type="type" value="gene"/>
</dbReference>
<dbReference type="MIM" id="231200">
    <property type="type" value="phenotype"/>
</dbReference>
<dbReference type="neXtProt" id="NX_P14770"/>
<dbReference type="OpenTargets" id="ENSG00000169704"/>
<dbReference type="Orphanet" id="274">
    <property type="disease" value="Bernard-Soulier syndrome"/>
</dbReference>
<dbReference type="PharmGKB" id="PA28825"/>
<dbReference type="VEuPathDB" id="HostDB:ENSG00000169704"/>
<dbReference type="eggNOG" id="KOG0619">
    <property type="taxonomic scope" value="Eukaryota"/>
</dbReference>
<dbReference type="GeneTree" id="ENSGT00530000064244"/>
<dbReference type="HOGENOM" id="CLU_094615_1_1_1"/>
<dbReference type="InParanoid" id="P14770"/>
<dbReference type="OMA" id="GYELGSC"/>
<dbReference type="OrthoDB" id="72369at2759"/>
<dbReference type="PAN-GO" id="P14770">
    <property type="GO annotations" value="0 GO annotations based on evolutionary models"/>
</dbReference>
<dbReference type="PhylomeDB" id="P14770"/>
<dbReference type="PathwayCommons" id="P14770"/>
<dbReference type="Reactome" id="R-HSA-140837">
    <property type="pathway name" value="Intrinsic Pathway of Fibrin Clot Formation"/>
</dbReference>
<dbReference type="Reactome" id="R-HSA-430116">
    <property type="pathway name" value="GP1b-IX-V activation signalling"/>
</dbReference>
<dbReference type="Reactome" id="R-HSA-75892">
    <property type="pathway name" value="Platelet Adhesion to exposed collagen"/>
</dbReference>
<dbReference type="Reactome" id="R-HSA-76009">
    <property type="pathway name" value="Platelet Aggregation (Plug Formation)"/>
</dbReference>
<dbReference type="Reactome" id="R-HSA-9673221">
    <property type="pathway name" value="Defective F9 activation"/>
</dbReference>
<dbReference type="Reactome" id="R-HSA-9845620">
    <property type="pathway name" value="Enhanced binding of GP1BA variant to VWF multimer:collagen"/>
</dbReference>
<dbReference type="Reactome" id="R-HSA-9846298">
    <property type="pathway name" value="Defective binding of VWF variant to GPIb:IX:V"/>
</dbReference>
<dbReference type="SignaLink" id="P14770"/>
<dbReference type="SIGNOR" id="P14770"/>
<dbReference type="BioGRID-ORCS" id="2815">
    <property type="hits" value="13 hits in 1147 CRISPR screens"/>
</dbReference>
<dbReference type="GeneWiki" id="Glycoprotein_IX"/>
<dbReference type="GenomeRNAi" id="2815"/>
<dbReference type="Pharos" id="P14770">
    <property type="development level" value="Tbio"/>
</dbReference>
<dbReference type="PRO" id="PR:P14770"/>
<dbReference type="Proteomes" id="UP000005640">
    <property type="component" value="Chromosome 3"/>
</dbReference>
<dbReference type="RNAct" id="P14770">
    <property type="molecule type" value="protein"/>
</dbReference>
<dbReference type="Bgee" id="ENSG00000169704">
    <property type="expression patterns" value="Expressed in monocyte and 70 other cell types or tissues"/>
</dbReference>
<dbReference type="GO" id="GO:1990779">
    <property type="term" value="C:glycoprotein Ib-IX-V complex"/>
    <property type="evidence" value="ECO:0000353"/>
    <property type="project" value="ComplexPortal"/>
</dbReference>
<dbReference type="GO" id="GO:0005886">
    <property type="term" value="C:plasma membrane"/>
    <property type="evidence" value="ECO:0000304"/>
    <property type="project" value="Reactome"/>
</dbReference>
<dbReference type="GO" id="GO:0007596">
    <property type="term" value="P:blood coagulation"/>
    <property type="evidence" value="ECO:0000304"/>
    <property type="project" value="ProtInc"/>
</dbReference>
<dbReference type="GO" id="GO:0007597">
    <property type="term" value="P:blood coagulation, intrinsic pathway"/>
    <property type="evidence" value="ECO:0000353"/>
    <property type="project" value="ComplexPortal"/>
</dbReference>
<dbReference type="GO" id="GO:0007155">
    <property type="term" value="P:cell adhesion"/>
    <property type="evidence" value="ECO:0000303"/>
    <property type="project" value="ProtInc"/>
</dbReference>
<dbReference type="GO" id="GO:0035855">
    <property type="term" value="P:megakaryocyte development"/>
    <property type="evidence" value="ECO:0000266"/>
    <property type="project" value="ComplexPortal"/>
</dbReference>
<dbReference type="GO" id="GO:0010572">
    <property type="term" value="P:positive regulation of platelet activation"/>
    <property type="evidence" value="ECO:0000314"/>
    <property type="project" value="ComplexPortal"/>
</dbReference>
<dbReference type="GO" id="GO:0051209">
    <property type="term" value="P:release of sequestered calcium ion into cytosol"/>
    <property type="evidence" value="ECO:0000314"/>
    <property type="project" value="ComplexPortal"/>
</dbReference>
<dbReference type="FunFam" id="3.80.10.10:FF:000553">
    <property type="entry name" value="Platelet glycoprotein IX"/>
    <property type="match status" value="1"/>
</dbReference>
<dbReference type="Gene3D" id="3.80.10.10">
    <property type="entry name" value="Ribonuclease Inhibitor"/>
    <property type="match status" value="1"/>
</dbReference>
<dbReference type="InterPro" id="IPR000483">
    <property type="entry name" value="Cys-rich_flank_reg_C"/>
</dbReference>
<dbReference type="InterPro" id="IPR052313">
    <property type="entry name" value="GPIb-IX-V_Complex"/>
</dbReference>
<dbReference type="InterPro" id="IPR001611">
    <property type="entry name" value="Leu-rich_rpt"/>
</dbReference>
<dbReference type="InterPro" id="IPR032675">
    <property type="entry name" value="LRR_dom_sf"/>
</dbReference>
<dbReference type="InterPro" id="IPR000372">
    <property type="entry name" value="LRRNT"/>
</dbReference>
<dbReference type="PANTHER" id="PTHR22650">
    <property type="entry name" value="GLYCOPROTEIN IB BETA"/>
    <property type="match status" value="1"/>
</dbReference>
<dbReference type="PANTHER" id="PTHR22650:SF6">
    <property type="entry name" value="PLATELET GLYCOPROTEIN IX"/>
    <property type="match status" value="1"/>
</dbReference>
<dbReference type="Pfam" id="PF13855">
    <property type="entry name" value="LRR_8"/>
    <property type="match status" value="1"/>
</dbReference>
<dbReference type="Pfam" id="PF01462">
    <property type="entry name" value="LRRNT"/>
    <property type="match status" value="1"/>
</dbReference>
<dbReference type="SMART" id="SM00082">
    <property type="entry name" value="LRRCT"/>
    <property type="match status" value="1"/>
</dbReference>
<dbReference type="SMART" id="SM00013">
    <property type="entry name" value="LRRNT"/>
    <property type="match status" value="1"/>
</dbReference>
<dbReference type="SUPFAM" id="SSF52058">
    <property type="entry name" value="L domain-like"/>
    <property type="match status" value="1"/>
</dbReference>
<sequence>MPAWGALFLLWATAEATKDCPSPCTCRALETMGLWVDCRGHGLTALPALPARTRHLLLANNSLQSVPPGAFDHLPQLQTLDVTQNPWHCDCSLTYLRLWLEDRTPEALLQVRCASPSLAAHGPLGRLTGYQLGSCGWQLQASWVRPGVLWDVALVAVAALGLALLAGLLCATTEALD</sequence>
<accession>P14770</accession>
<accession>Q14445</accession>
<accession>Q8N1D1</accession>
<accession>Q92525</accession>
<proteinExistence type="evidence at protein level"/>
<keyword id="KW-0002">3D-structure</keyword>
<keyword id="KW-0087">Bernard Soulier syndrome</keyword>
<keyword id="KW-0094">Blood coagulation</keyword>
<keyword id="KW-0130">Cell adhesion</keyword>
<keyword id="KW-0903">Direct protein sequencing</keyword>
<keyword id="KW-0225">Disease variant</keyword>
<keyword id="KW-1015">Disulfide bond</keyword>
<keyword id="KW-0325">Glycoprotein</keyword>
<keyword id="KW-0356">Hemostasis</keyword>
<keyword id="KW-0433">Leucine-rich repeat</keyword>
<keyword id="KW-0472">Membrane</keyword>
<keyword id="KW-1267">Proteomics identification</keyword>
<keyword id="KW-1185">Reference proteome</keyword>
<keyword id="KW-0732">Signal</keyword>
<keyword id="KW-0812">Transmembrane</keyword>
<keyword id="KW-1133">Transmembrane helix</keyword>
<evidence type="ECO:0000255" key="1"/>
<evidence type="ECO:0000269" key="2">
    <source>
    </source>
</evidence>
<evidence type="ECO:0000269" key="3">
    <source>
    </source>
</evidence>
<evidence type="ECO:0000269" key="4">
    <source>
    </source>
</evidence>
<evidence type="ECO:0000269" key="5">
    <source>
    </source>
</evidence>
<evidence type="ECO:0000269" key="6">
    <source>
    </source>
</evidence>
<evidence type="ECO:0000269" key="7">
    <source>
    </source>
</evidence>
<evidence type="ECO:0000269" key="8">
    <source>
    </source>
</evidence>
<evidence type="ECO:0000269" key="9">
    <source>
    </source>
</evidence>
<evidence type="ECO:0000269" key="10">
    <source>
    </source>
</evidence>
<evidence type="ECO:0000269" key="11">
    <source>
    </source>
</evidence>
<evidence type="ECO:0000269" key="12">
    <source>
    </source>
</evidence>
<evidence type="ECO:0000269" key="13">
    <source>
    </source>
</evidence>
<evidence type="ECO:0000305" key="14"/>
<evidence type="ECO:0007829" key="15">
    <source>
        <dbReference type="PDB" id="3REZ"/>
    </source>
</evidence>